<evidence type="ECO:0000250" key="1"/>
<evidence type="ECO:0000250" key="2">
    <source>
        <dbReference type="UniProtKB" id="P0CG47"/>
    </source>
</evidence>
<evidence type="ECO:0000255" key="3">
    <source>
        <dbReference type="PROSITE-ProRule" id="PRU00214"/>
    </source>
</evidence>
<evidence type="ECO:0000305" key="4"/>
<protein>
    <recommendedName>
        <fullName>Polyubiquitin-B</fullName>
    </recommendedName>
    <component>
        <recommendedName>
            <fullName>Ubiquitin</fullName>
        </recommendedName>
    </component>
</protein>
<sequence length="229" mass="25762">MQIFVKTLTGKTITLEVEPSDTIENVKAKIQDKEGIPPDQQRLIFAGKQLEDGRTLSDYNIQKESTLHLVLRLRGGMQIFVKTLTGKTITLEVEPSDTIENVKAKIQDKEGIPPDQQRLIFAGKQLEDGRTLSDYNIQKESTLHLVLRLRGGMQIFVKTLTGKTITLEVEPSDTIENVKAKIQDKEGIPPDQQRLIFAGKQLEDGRTLSDYNIQKESTLHLVLRLRGGC</sequence>
<name>UBB_PANTR</name>
<feature type="chain" id="PRO_0000396202" description="Ubiquitin">
    <location>
        <begin position="1"/>
        <end position="76"/>
    </location>
</feature>
<feature type="chain" id="PRO_0000396203" description="Ubiquitin">
    <location>
        <begin position="77"/>
        <end position="152"/>
    </location>
</feature>
<feature type="chain" id="PRO_0000396204" description="Ubiquitin">
    <location>
        <begin position="153"/>
        <end position="228"/>
    </location>
</feature>
<feature type="propeptide" id="PRO_0000396205">
    <location>
        <position position="229"/>
    </location>
</feature>
<feature type="domain" description="Ubiquitin-like 1" evidence="3">
    <location>
        <begin position="1"/>
        <end position="76"/>
    </location>
</feature>
<feature type="domain" description="Ubiquitin-like 2" evidence="3">
    <location>
        <begin position="77"/>
        <end position="152"/>
    </location>
</feature>
<feature type="domain" description="Ubiquitin-like 3" evidence="3">
    <location>
        <begin position="153"/>
        <end position="228"/>
    </location>
</feature>
<feature type="site" description="Interacts with activating enzyme">
    <location>
        <position position="54"/>
    </location>
</feature>
<feature type="site" description="Essential for function">
    <location>
        <position position="68"/>
    </location>
</feature>
<feature type="site" description="Interacts with activating enzyme">
    <location>
        <position position="72"/>
    </location>
</feature>
<feature type="modified residue" description="Phosphoserine; by PINK1" evidence="2">
    <location>
        <position position="65"/>
    </location>
</feature>
<feature type="modified residue" description="ADP-ribosylglycine" evidence="2">
    <location>
        <position position="76"/>
    </location>
</feature>
<feature type="cross-link" description="Glycyl lysine isopeptide (Lys-Gly) (interchain with G-Cter in ubiquitin)" evidence="2">
    <location>
        <position position="6"/>
    </location>
</feature>
<feature type="cross-link" description="Glycyl lysine isopeptide (Lys-Gly) (interchain with G-Cter in ubiquitin)" evidence="2">
    <location>
        <position position="11"/>
    </location>
</feature>
<feature type="cross-link" description="Glycyl lysine isopeptide (Lys-Gly) (interchain with G-Cter in ubiquitin)" evidence="2">
    <location>
        <position position="27"/>
    </location>
</feature>
<feature type="cross-link" description="Glycyl lysine isopeptide (Lys-Gly) (interchain with G-Cter in ubiquitin)" evidence="2">
    <location>
        <position position="29"/>
    </location>
</feature>
<feature type="cross-link" description="Glycyl lysine isopeptide (Lys-Gly) (interchain with G-Cter in ubiquitin)" evidence="2">
    <location>
        <position position="33"/>
    </location>
</feature>
<feature type="cross-link" description="Glycyl lysine isopeptide (Lys-Gly) (interchain with G-Cter in ubiquitin)" evidence="2">
    <location>
        <position position="48"/>
    </location>
</feature>
<feature type="cross-link" description="Glycyl lysine isopeptide (Lys-Gly) (interchain with G-Cter in ubiquitin)" evidence="2">
    <location>
        <position position="63"/>
    </location>
</feature>
<feature type="cross-link" description="Glycyl lysine isopeptide (Gly-Lys) (interchain with K-? in acceptor proteins)" evidence="3">
    <location>
        <position position="76"/>
    </location>
</feature>
<keyword id="KW-0013">ADP-ribosylation</keyword>
<keyword id="KW-0963">Cytoplasm</keyword>
<keyword id="KW-1017">Isopeptide bond</keyword>
<keyword id="KW-0472">Membrane</keyword>
<keyword id="KW-0496">Mitochondrion</keyword>
<keyword id="KW-1000">Mitochondrion outer membrane</keyword>
<keyword id="KW-0539">Nucleus</keyword>
<keyword id="KW-0597">Phosphoprotein</keyword>
<keyword id="KW-1185">Reference proteome</keyword>
<keyword id="KW-0677">Repeat</keyword>
<keyword id="KW-0832">Ubl conjugation</keyword>
<reference key="1">
    <citation type="journal article" date="2003" name="J. Mol. Evol.">
        <title>Lineage-specific homogenization of the polyubiquitin gene among human and great apes.</title>
        <authorList>
            <person name="Tachikui H."/>
            <person name="Saitou N."/>
            <person name="Nakajima T."/>
            <person name="Hayasaka I."/>
            <person name="Ishida T."/>
            <person name="Inoue I."/>
        </authorList>
    </citation>
    <scope>NUCLEOTIDE SEQUENCE [GENOMIC DNA]</scope>
</reference>
<comment type="function">
    <molecule>Ubiquitin</molecule>
    <text evidence="2">Exists either covalently attached to another protein, or free (unanchored). When covalently bound, it is conjugated to target proteins via an isopeptide bond either as a monomer (monoubiquitin), a polymer linked via different Lys residues of the ubiquitin (polyubiquitin chains) or a linear polymer linked via the initiator Met of the ubiquitin (linear polyubiquitin chains). Polyubiquitin chains, when attached to a target protein, have different functions depending on the Lys residue of the ubiquitin that is linked: Lys-6-linked may be involved in DNA repair; Lys-11-linked is involved in ERAD (endoplasmic reticulum-associated degradation) and in cell-cycle regulation; Lys-29-linked is involved in proteotoxic stress response and cell cycle; Lys-33-linked is involved in kinase modification; Lys-48-linked is involved in protein degradation via the proteasome; Lys-63-linked is involved in endocytosis, DNA-damage responses as well as in signaling processes leading to activation of the transcription factor NF-kappa-B. Linear polymer chains formed via attachment by the initiator Met lead to cell signaling. Ubiquitin is usually conjugated to Lys residues of target proteins, however, in rare cases, conjugation to Cys or Ser residues has been observed. When polyubiquitin is free (unanchored-polyubiquitin), it also has distinct roles, such as in activation of protein kinases, and in signaling.</text>
</comment>
<comment type="subunit">
    <text evidence="2">Interacts with SKP1-KMD2A and SKP1-KMD2B complexes.</text>
</comment>
<comment type="subcellular location">
    <molecule>Ubiquitin</molecule>
    <subcellularLocation>
        <location evidence="1">Cytoplasm</location>
    </subcellularLocation>
    <subcellularLocation>
        <location evidence="1">Nucleus</location>
    </subcellularLocation>
    <subcellularLocation>
        <location evidence="2">Mitochondrion outer membrane</location>
        <topology evidence="2">Peripheral membrane protein</topology>
    </subcellularLocation>
</comment>
<comment type="PTM">
    <molecule>Ubiquitin</molecule>
    <text evidence="2">Phosphorylated at Ser-65 by PINK1 during mitophagy. Phosphorylated ubiquitin specifically binds and activates parkin (PRKN), triggering mitophagy. Phosphorylation does not affect E1-mediated E2 charging of ubiquitin but affects discharging of E2 enzymes to form polyubiquitin chains. It also affects deubiquitination by deubiquitinase enzymes such as USP30.</text>
</comment>
<comment type="PTM">
    <molecule>Ubiquitin</molecule>
    <text evidence="2">Mono-ADP-ribosylated at the C-terminus by PARP9, a component of the PPAR9-DTX3L complex. ADP-ribosylation requires processing by E1 and E2 enzymes and prevents ubiquitin conjugation to substrates such as histones.</text>
</comment>
<comment type="miscellaneous">
    <text>Ubiquitin is encoded by 4 different genes. UBA52 and RPS27A genes code for a single copy of ubiquitin fused to the ribosomal proteins eL40 and eS31, respectively. UBB and UBC genes code for a polyubiquitin precursor with exact head to tail repeats, the number of repeats differ between species and strains.</text>
</comment>
<comment type="miscellaneous">
    <text>For the sake of clarity sequence features are annotated only for the first chain, and are not repeated for each of the following chains.</text>
</comment>
<comment type="similarity">
    <text evidence="4">Belongs to the ubiquitin family.</text>
</comment>
<gene>
    <name type="primary">UBB</name>
</gene>
<dbReference type="EMBL" id="AB089619">
    <property type="protein sequence ID" value="BAC56957.1"/>
    <property type="molecule type" value="Genomic_DNA"/>
</dbReference>
<dbReference type="RefSeq" id="NP_001009117.1">
    <property type="nucleotide sequence ID" value="NM_001009117.2"/>
</dbReference>
<dbReference type="RefSeq" id="XP_016786094.1">
    <property type="nucleotide sequence ID" value="XM_016930605.1"/>
</dbReference>
<dbReference type="RefSeq" id="XP_016786095.1">
    <property type="nucleotide sequence ID" value="XM_016930606.1"/>
</dbReference>
<dbReference type="SMR" id="P0CG65"/>
<dbReference type="FunCoup" id="P0CG65">
    <property type="interactions" value="2016"/>
</dbReference>
<dbReference type="GeneID" id="468372"/>
<dbReference type="KEGG" id="ptr:468372"/>
<dbReference type="CTD" id="7314"/>
<dbReference type="eggNOG" id="KOG0001">
    <property type="taxonomic scope" value="Eukaryota"/>
</dbReference>
<dbReference type="InParanoid" id="P0CG65"/>
<dbReference type="OrthoDB" id="2574at9604"/>
<dbReference type="Proteomes" id="UP000002277">
    <property type="component" value="Unplaced"/>
</dbReference>
<dbReference type="GO" id="GO:0005737">
    <property type="term" value="C:cytoplasm"/>
    <property type="evidence" value="ECO:0000318"/>
    <property type="project" value="GO_Central"/>
</dbReference>
<dbReference type="GO" id="GO:0005741">
    <property type="term" value="C:mitochondrial outer membrane"/>
    <property type="evidence" value="ECO:0007669"/>
    <property type="project" value="UniProtKB-SubCell"/>
</dbReference>
<dbReference type="GO" id="GO:0005634">
    <property type="term" value="C:nucleus"/>
    <property type="evidence" value="ECO:0000318"/>
    <property type="project" value="GO_Central"/>
</dbReference>
<dbReference type="GO" id="GO:0031386">
    <property type="term" value="F:protein tag activity"/>
    <property type="evidence" value="ECO:0000318"/>
    <property type="project" value="GO_Central"/>
</dbReference>
<dbReference type="GO" id="GO:0031625">
    <property type="term" value="F:ubiquitin protein ligase binding"/>
    <property type="evidence" value="ECO:0000318"/>
    <property type="project" value="GO_Central"/>
</dbReference>
<dbReference type="GO" id="GO:0019941">
    <property type="term" value="P:modification-dependent protein catabolic process"/>
    <property type="evidence" value="ECO:0000318"/>
    <property type="project" value="GO_Central"/>
</dbReference>
<dbReference type="GO" id="GO:0016567">
    <property type="term" value="P:protein ubiquitination"/>
    <property type="evidence" value="ECO:0000318"/>
    <property type="project" value="GO_Central"/>
</dbReference>
<dbReference type="CDD" id="cd01803">
    <property type="entry name" value="Ubl_ubiquitin"/>
    <property type="match status" value="3"/>
</dbReference>
<dbReference type="FunFam" id="3.10.20.90:FF:000158">
    <property type="entry name" value="Polyubiquitin 5"/>
    <property type="match status" value="3"/>
</dbReference>
<dbReference type="Gene3D" id="3.10.20.90">
    <property type="entry name" value="Phosphatidylinositol 3-kinase Catalytic Subunit, Chain A, domain 1"/>
    <property type="match status" value="3"/>
</dbReference>
<dbReference type="InterPro" id="IPR000626">
    <property type="entry name" value="Ubiquitin-like_dom"/>
</dbReference>
<dbReference type="InterPro" id="IPR029071">
    <property type="entry name" value="Ubiquitin-like_domsf"/>
</dbReference>
<dbReference type="InterPro" id="IPR019954">
    <property type="entry name" value="Ubiquitin_CS"/>
</dbReference>
<dbReference type="InterPro" id="IPR019956">
    <property type="entry name" value="Ubiquitin_dom"/>
</dbReference>
<dbReference type="InterPro" id="IPR050158">
    <property type="entry name" value="Ubiquitin_ubiquitin-like"/>
</dbReference>
<dbReference type="PANTHER" id="PTHR10666">
    <property type="entry name" value="UBIQUITIN"/>
    <property type="match status" value="1"/>
</dbReference>
<dbReference type="Pfam" id="PF00240">
    <property type="entry name" value="ubiquitin"/>
    <property type="match status" value="3"/>
</dbReference>
<dbReference type="PRINTS" id="PR00348">
    <property type="entry name" value="UBIQUITIN"/>
</dbReference>
<dbReference type="SMART" id="SM00213">
    <property type="entry name" value="UBQ"/>
    <property type="match status" value="3"/>
</dbReference>
<dbReference type="SUPFAM" id="SSF54236">
    <property type="entry name" value="Ubiquitin-like"/>
    <property type="match status" value="3"/>
</dbReference>
<dbReference type="PROSITE" id="PS00299">
    <property type="entry name" value="UBIQUITIN_1"/>
    <property type="match status" value="3"/>
</dbReference>
<dbReference type="PROSITE" id="PS50053">
    <property type="entry name" value="UBIQUITIN_2"/>
    <property type="match status" value="3"/>
</dbReference>
<proteinExistence type="inferred from homology"/>
<accession>P0CG65</accession>
<accession>Q867C3</accession>
<accession>Q867C7</accession>
<organism>
    <name type="scientific">Pan troglodytes</name>
    <name type="common">Chimpanzee</name>
    <dbReference type="NCBI Taxonomy" id="9598"/>
    <lineage>
        <taxon>Eukaryota</taxon>
        <taxon>Metazoa</taxon>
        <taxon>Chordata</taxon>
        <taxon>Craniata</taxon>
        <taxon>Vertebrata</taxon>
        <taxon>Euteleostomi</taxon>
        <taxon>Mammalia</taxon>
        <taxon>Eutheria</taxon>
        <taxon>Euarchontoglires</taxon>
        <taxon>Primates</taxon>
        <taxon>Haplorrhini</taxon>
        <taxon>Catarrhini</taxon>
        <taxon>Hominidae</taxon>
        <taxon>Pan</taxon>
    </lineage>
</organism>